<proteinExistence type="inferred from homology"/>
<protein>
    <recommendedName>
        <fullName evidence="1">Small ribosomal subunit protein uS11</fullName>
    </recommendedName>
    <alternativeName>
        <fullName evidence="2">30S ribosomal protein S11</fullName>
    </alternativeName>
</protein>
<organism>
    <name type="scientific">Sulfurimonas denitrificans (strain ATCC 33889 / DSM 1251)</name>
    <name type="common">Thiomicrospira denitrificans (strain ATCC 33889 / DSM 1251)</name>
    <dbReference type="NCBI Taxonomy" id="326298"/>
    <lineage>
        <taxon>Bacteria</taxon>
        <taxon>Pseudomonadati</taxon>
        <taxon>Campylobacterota</taxon>
        <taxon>Epsilonproteobacteria</taxon>
        <taxon>Campylobacterales</taxon>
        <taxon>Sulfurimonadaceae</taxon>
        <taxon>Sulfurimonas</taxon>
    </lineage>
</organism>
<feature type="chain" id="PRO_0000230440" description="Small ribosomal subunit protein uS11">
    <location>
        <begin position="1"/>
        <end position="130"/>
    </location>
</feature>
<name>RS11_SULDN</name>
<comment type="function">
    <text evidence="1">Located on the platform of the 30S subunit, it bridges several disparate RNA helices of the 16S rRNA. Forms part of the Shine-Dalgarno cleft in the 70S ribosome.</text>
</comment>
<comment type="subunit">
    <text evidence="1">Part of the 30S ribosomal subunit. Interacts with proteins S7 and S18. Binds to IF-3.</text>
</comment>
<comment type="similarity">
    <text evidence="1">Belongs to the universal ribosomal protein uS11 family.</text>
</comment>
<dbReference type="EMBL" id="CP000153">
    <property type="protein sequence ID" value="ABB43606.1"/>
    <property type="molecule type" value="Genomic_DNA"/>
</dbReference>
<dbReference type="RefSeq" id="WP_011371960.1">
    <property type="nucleotide sequence ID" value="NC_007575.1"/>
</dbReference>
<dbReference type="SMR" id="Q30TS5"/>
<dbReference type="STRING" id="326298.Suden_0325"/>
<dbReference type="KEGG" id="tdn:Suden_0325"/>
<dbReference type="eggNOG" id="COG0100">
    <property type="taxonomic scope" value="Bacteria"/>
</dbReference>
<dbReference type="HOGENOM" id="CLU_072439_5_0_7"/>
<dbReference type="OrthoDB" id="9806415at2"/>
<dbReference type="Proteomes" id="UP000002714">
    <property type="component" value="Chromosome"/>
</dbReference>
<dbReference type="GO" id="GO:1990904">
    <property type="term" value="C:ribonucleoprotein complex"/>
    <property type="evidence" value="ECO:0007669"/>
    <property type="project" value="UniProtKB-KW"/>
</dbReference>
<dbReference type="GO" id="GO:0005840">
    <property type="term" value="C:ribosome"/>
    <property type="evidence" value="ECO:0007669"/>
    <property type="project" value="UniProtKB-KW"/>
</dbReference>
<dbReference type="GO" id="GO:0019843">
    <property type="term" value="F:rRNA binding"/>
    <property type="evidence" value="ECO:0007669"/>
    <property type="project" value="UniProtKB-UniRule"/>
</dbReference>
<dbReference type="GO" id="GO:0003735">
    <property type="term" value="F:structural constituent of ribosome"/>
    <property type="evidence" value="ECO:0007669"/>
    <property type="project" value="InterPro"/>
</dbReference>
<dbReference type="GO" id="GO:0006412">
    <property type="term" value="P:translation"/>
    <property type="evidence" value="ECO:0007669"/>
    <property type="project" value="UniProtKB-UniRule"/>
</dbReference>
<dbReference type="Gene3D" id="3.30.420.80">
    <property type="entry name" value="Ribosomal protein S11"/>
    <property type="match status" value="1"/>
</dbReference>
<dbReference type="HAMAP" id="MF_01310">
    <property type="entry name" value="Ribosomal_uS11"/>
    <property type="match status" value="1"/>
</dbReference>
<dbReference type="InterPro" id="IPR001971">
    <property type="entry name" value="Ribosomal_uS11"/>
</dbReference>
<dbReference type="InterPro" id="IPR019981">
    <property type="entry name" value="Ribosomal_uS11_bac-type"/>
</dbReference>
<dbReference type="InterPro" id="IPR036967">
    <property type="entry name" value="Ribosomal_uS11_sf"/>
</dbReference>
<dbReference type="NCBIfam" id="NF003698">
    <property type="entry name" value="PRK05309.1"/>
    <property type="match status" value="1"/>
</dbReference>
<dbReference type="NCBIfam" id="TIGR03632">
    <property type="entry name" value="uS11_bact"/>
    <property type="match status" value="1"/>
</dbReference>
<dbReference type="PANTHER" id="PTHR11759">
    <property type="entry name" value="40S RIBOSOMAL PROTEIN S14/30S RIBOSOMAL PROTEIN S11"/>
    <property type="match status" value="1"/>
</dbReference>
<dbReference type="Pfam" id="PF00411">
    <property type="entry name" value="Ribosomal_S11"/>
    <property type="match status" value="1"/>
</dbReference>
<dbReference type="PIRSF" id="PIRSF002131">
    <property type="entry name" value="Ribosomal_S11"/>
    <property type="match status" value="1"/>
</dbReference>
<dbReference type="SUPFAM" id="SSF53137">
    <property type="entry name" value="Translational machinery components"/>
    <property type="match status" value="1"/>
</dbReference>
<evidence type="ECO:0000255" key="1">
    <source>
        <dbReference type="HAMAP-Rule" id="MF_01310"/>
    </source>
</evidence>
<evidence type="ECO:0000305" key="2"/>
<accession>Q30TS5</accession>
<gene>
    <name evidence="1" type="primary">rpsK</name>
    <name type="ordered locus">Suden_0325</name>
</gene>
<reference key="1">
    <citation type="journal article" date="2008" name="Appl. Environ. Microbiol.">
        <title>Genome of the epsilonproteobacterial chemolithoautotroph Sulfurimonas denitrificans.</title>
        <authorList>
            <person name="Sievert S.M."/>
            <person name="Scott K.M."/>
            <person name="Klotz M.G."/>
            <person name="Chain P.S.G."/>
            <person name="Hauser L.J."/>
            <person name="Hemp J."/>
            <person name="Huegler M."/>
            <person name="Land M."/>
            <person name="Lapidus A."/>
            <person name="Larimer F.W."/>
            <person name="Lucas S."/>
            <person name="Malfatti S.A."/>
            <person name="Meyer F."/>
            <person name="Paulsen I.T."/>
            <person name="Ren Q."/>
            <person name="Simon J."/>
            <person name="Bailey K."/>
            <person name="Diaz E."/>
            <person name="Fitzpatrick K.A."/>
            <person name="Glover B."/>
            <person name="Gwatney N."/>
            <person name="Korajkic A."/>
            <person name="Long A."/>
            <person name="Mobberley J.M."/>
            <person name="Pantry S.N."/>
            <person name="Pazder G."/>
            <person name="Peterson S."/>
            <person name="Quintanilla J.D."/>
            <person name="Sprinkle R."/>
            <person name="Stephens J."/>
            <person name="Thomas P."/>
            <person name="Vaughn R."/>
            <person name="Weber M.J."/>
            <person name="Wooten L.L."/>
        </authorList>
    </citation>
    <scope>NUCLEOTIDE SEQUENCE [LARGE SCALE GENOMIC DNA]</scope>
    <source>
        <strain>ATCC 33889 / DSM 1251</strain>
    </source>
</reference>
<sequence length="130" mass="13783">MAKRKAVRKKVVKKNIARGICHISASFNNTLVTITDEMGNMIAWSSAGSLGFKGSKKSTPFAAQAAVEDAVAKAQVHGVKELGIKVQGPGSGRETATKAVGGIEGIRVTFMKDVTPLPHNGCRAPKRRRV</sequence>
<keyword id="KW-1185">Reference proteome</keyword>
<keyword id="KW-0687">Ribonucleoprotein</keyword>
<keyword id="KW-0689">Ribosomal protein</keyword>
<keyword id="KW-0694">RNA-binding</keyword>
<keyword id="KW-0699">rRNA-binding</keyword>